<accession>Q96MU8</accession>
<accession>B0QY46</accession>
<accession>B0QY47</accession>
<accession>B1AJR5</accession>
<accession>Q5TIB9</accession>
<accession>Q6P3X6</accession>
<accession>Q9BY70</accession>
<accession>Q9UGS5</accession>
<accession>Q9UGU1</accession>
<comment type="function">
    <text evidence="1 2">Receptor for Dickkopf proteins. Cooperates with DKK1/2 to inhibit Wnt/beta-catenin signaling by promoting the endocytosis of Wnt receptors LRP5 and LRP6. In the absence of DKK1, potentiates Wnt-beta-catenin signaling by maintaining LRP5 or LRP6 at the cell membrane. Can trigger apoptosis in a Wnt-independent manner and this apoptotic activity is inhibited upon binding of the ligand DKK1. Plays a role in limb development; attenuates Wnt signaling in the developing limb to allow normal limb patterning and can also negatively regulate bone formation. Modulates cell fate decisions in the developing cochlea with an inhibitory role in hair cell fate specification.</text>
</comment>
<comment type="subunit">
    <text evidence="7 9">Forms a ternary complex with DKK1 and LRP6 (PubMed:27524201). Interacts with LRP6 in a DKK1-dependent manner. Interacts with DKK1 and RSPO1 (via FU repeats) (PubMed:17804805).</text>
</comment>
<comment type="interaction">
    <interactant intactId="EBI-15656184">
        <id>Q96MU8</id>
    </interactant>
    <interactant intactId="EBI-742864">
        <id>O94907</id>
        <label>DKK1</label>
    </interactant>
    <organismsDiffer>false</organismsDiffer>
    <experiments>3</experiments>
</comment>
<comment type="subcellular location">
    <subcellularLocation>
        <location evidence="2">Cell membrane</location>
        <topology evidence="12">Single-pass type I membrane protein</topology>
    </subcellularLocation>
</comment>
<comment type="alternative products">
    <event type="alternative splicing"/>
    <isoform>
        <id>Q96MU8-1</id>
        <name>1</name>
        <sequence type="displayed"/>
    </isoform>
    <isoform>
        <id>Q96MU8-2</id>
        <name>2</name>
        <sequence type="described" ref="VSP_034914 VSP_003900"/>
    </isoform>
    <isoform>
        <id>Q96MU8-3</id>
        <name>3</name>
        <sequence type="described" ref="VSP_034914 VSP_015698"/>
    </isoform>
</comment>
<comment type="disease" evidence="8">
    <disease id="DI-04968">
        <name>Ectodermal dysplasia 13, hair/tooth type</name>
        <acronym>ECTD13</acronym>
        <description>A form of ectodermal dysplasia, a disorder due to abnormal development of two or more ectodermal structures. ECTD13 is an autosomal recessive form characterized by severe oligodontia accompanied by anomalies of hair and skin.</description>
        <dbReference type="MIM" id="617392"/>
    </disease>
    <text>The disease is caused by variants affecting the gene represented in this entry.</text>
</comment>
<comment type="miscellaneous">
    <molecule>Isoform 1</molecule>
    <text>Exon 1 splicing donor site is not canonical.</text>
</comment>
<name>KREM1_HUMAN</name>
<dbReference type="EMBL" id="AB059618">
    <property type="protein sequence ID" value="BAB40969.1"/>
    <property type="molecule type" value="mRNA"/>
</dbReference>
<dbReference type="EMBL" id="AK056425">
    <property type="protein sequence ID" value="BAB71180.1"/>
    <property type="molecule type" value="mRNA"/>
</dbReference>
<dbReference type="EMBL" id="AL021393">
    <property type="status" value="NOT_ANNOTATED_CDS"/>
    <property type="molecule type" value="Genomic_DNA"/>
</dbReference>
<dbReference type="EMBL" id="Z95116">
    <property type="status" value="NOT_ANNOTATED_CDS"/>
    <property type="molecule type" value="Genomic_DNA"/>
</dbReference>
<dbReference type="EMBL" id="CH471095">
    <property type="protein sequence ID" value="EAW59774.1"/>
    <property type="molecule type" value="Genomic_DNA"/>
</dbReference>
<dbReference type="EMBL" id="BC063787">
    <property type="protein sequence ID" value="AAH63787.1"/>
    <property type="molecule type" value="mRNA"/>
</dbReference>
<dbReference type="CCDS" id="CCDS13849.1">
    <molecule id="Q96MU8-2"/>
</dbReference>
<dbReference type="CCDS" id="CCDS43000.2">
    <molecule id="Q96MU8-3"/>
</dbReference>
<dbReference type="RefSeq" id="NP_001034659.2">
    <molecule id="Q96MU8-3"/>
    <property type="nucleotide sequence ID" value="NM_001039570.3"/>
</dbReference>
<dbReference type="RefSeq" id="NP_114434.3">
    <molecule id="Q96MU8-2"/>
    <property type="nucleotide sequence ID" value="NM_032045.4"/>
</dbReference>
<dbReference type="PDB" id="5FWS">
    <property type="method" value="X-ray"/>
    <property type="resolution" value="1.90 A"/>
    <property type="chains" value="A=29-373"/>
</dbReference>
<dbReference type="PDB" id="5FWT">
    <property type="method" value="X-ray"/>
    <property type="resolution" value="2.10 A"/>
    <property type="chains" value="A=29-373"/>
</dbReference>
<dbReference type="PDB" id="5FWU">
    <property type="method" value="X-ray"/>
    <property type="resolution" value="2.80 A"/>
    <property type="chains" value="A=29-373"/>
</dbReference>
<dbReference type="PDB" id="5FWV">
    <property type="method" value="X-ray"/>
    <property type="resolution" value="3.20 A"/>
    <property type="chains" value="A=29-373"/>
</dbReference>
<dbReference type="PDB" id="5FWW">
    <property type="method" value="X-ray"/>
    <property type="resolution" value="3.50 A"/>
    <property type="chains" value="B=30-322"/>
</dbReference>
<dbReference type="PDB" id="7BZT">
    <property type="method" value="EM"/>
    <property type="resolution" value="3.00 A"/>
    <property type="chains" value="E=23-375"/>
</dbReference>
<dbReference type="PDB" id="7BZU">
    <property type="method" value="EM"/>
    <property type="resolution" value="3.00 A"/>
    <property type="chains" value="E=23-375"/>
</dbReference>
<dbReference type="PDBsum" id="5FWS"/>
<dbReference type="PDBsum" id="5FWT"/>
<dbReference type="PDBsum" id="5FWU"/>
<dbReference type="PDBsum" id="5FWV"/>
<dbReference type="PDBsum" id="5FWW"/>
<dbReference type="PDBsum" id="7BZT"/>
<dbReference type="PDBsum" id="7BZU"/>
<dbReference type="EMDB" id="EMD-10263"/>
<dbReference type="EMDB" id="EMD-30259"/>
<dbReference type="EMDB" id="EMD-30260"/>
<dbReference type="SMR" id="Q96MU8"/>
<dbReference type="BioGRID" id="123844">
    <property type="interactions" value="1"/>
</dbReference>
<dbReference type="CORUM" id="Q96MU8"/>
<dbReference type="DIP" id="DIP-46462N"/>
<dbReference type="FunCoup" id="Q96MU8">
    <property type="interactions" value="788"/>
</dbReference>
<dbReference type="IntAct" id="Q96MU8">
    <property type="interactions" value="4"/>
</dbReference>
<dbReference type="STRING" id="9606.ENSP00000331242"/>
<dbReference type="GlyCosmos" id="Q96MU8">
    <property type="glycosylation" value="6 sites, No reported glycans"/>
</dbReference>
<dbReference type="GlyGen" id="Q96MU8">
    <property type="glycosylation" value="6 sites, 2 N-linked glycans (2 sites)"/>
</dbReference>
<dbReference type="iPTMnet" id="Q96MU8"/>
<dbReference type="PhosphoSitePlus" id="Q96MU8"/>
<dbReference type="BioMuta" id="KREMEN1"/>
<dbReference type="DMDM" id="212287927"/>
<dbReference type="jPOST" id="Q96MU8"/>
<dbReference type="MassIVE" id="Q96MU8"/>
<dbReference type="PaxDb" id="9606-ENSP00000331242"/>
<dbReference type="PeptideAtlas" id="Q96MU8"/>
<dbReference type="ProteomicsDB" id="77415">
    <molecule id="Q96MU8-1"/>
</dbReference>
<dbReference type="ProteomicsDB" id="77416">
    <molecule id="Q96MU8-2"/>
</dbReference>
<dbReference type="ProteomicsDB" id="77417">
    <molecule id="Q96MU8-3"/>
</dbReference>
<dbReference type="Antibodypedia" id="24417">
    <property type="antibodies" value="316 antibodies from 28 providers"/>
</dbReference>
<dbReference type="DNASU" id="83999"/>
<dbReference type="Ensembl" id="ENST00000327813.9">
    <molecule id="Q96MU8-2"/>
    <property type="protein sequence ID" value="ENSP00000331242.5"/>
    <property type="gene ID" value="ENSG00000183762.13"/>
</dbReference>
<dbReference type="Ensembl" id="ENST00000400335.9">
    <molecule id="Q96MU8-3"/>
    <property type="protein sequence ID" value="ENSP00000383189.4"/>
    <property type="gene ID" value="ENSG00000183762.13"/>
</dbReference>
<dbReference type="Ensembl" id="ENST00000407188.5">
    <molecule id="Q96MU8-1"/>
    <property type="protein sequence ID" value="ENSP00000385431.1"/>
    <property type="gene ID" value="ENSG00000183762.13"/>
</dbReference>
<dbReference type="GeneID" id="83999"/>
<dbReference type="KEGG" id="hsa:83999"/>
<dbReference type="MANE-Select" id="ENST00000400335.9">
    <molecule id="Q96MU8-3"/>
    <property type="protein sequence ID" value="ENSP00000383189.4"/>
    <property type="RefSeq nucleotide sequence ID" value="NM_001039570.3"/>
    <property type="RefSeq protein sequence ID" value="NP_001034659.2"/>
</dbReference>
<dbReference type="UCSC" id="uc003ael.3">
    <molecule id="Q96MU8-1"/>
    <property type="organism name" value="human"/>
</dbReference>
<dbReference type="AGR" id="HGNC:17550"/>
<dbReference type="CTD" id="83999"/>
<dbReference type="DisGeNET" id="83999"/>
<dbReference type="GeneCards" id="KREMEN1"/>
<dbReference type="HGNC" id="HGNC:17550">
    <property type="gene designation" value="KREMEN1"/>
</dbReference>
<dbReference type="HPA" id="ENSG00000183762">
    <property type="expression patterns" value="Low tissue specificity"/>
</dbReference>
<dbReference type="MalaCards" id="KREMEN1"/>
<dbReference type="MIM" id="609898">
    <property type="type" value="gene"/>
</dbReference>
<dbReference type="MIM" id="617392">
    <property type="type" value="phenotype"/>
</dbReference>
<dbReference type="neXtProt" id="NX_Q96MU8"/>
<dbReference type="OpenTargets" id="ENSG00000183762"/>
<dbReference type="PharmGKB" id="PA38241"/>
<dbReference type="VEuPathDB" id="HostDB:ENSG00000183762"/>
<dbReference type="eggNOG" id="KOG4157">
    <property type="taxonomic scope" value="Eukaryota"/>
</dbReference>
<dbReference type="GeneTree" id="ENSGT00940000158390"/>
<dbReference type="HOGENOM" id="CLU_043485_0_0_1"/>
<dbReference type="InParanoid" id="Q96MU8"/>
<dbReference type="OMA" id="RACYWTI"/>
<dbReference type="OrthoDB" id="4781at2759"/>
<dbReference type="PAN-GO" id="Q96MU8">
    <property type="GO annotations" value="2 GO annotations based on evolutionary models"/>
</dbReference>
<dbReference type="PhylomeDB" id="Q96MU8"/>
<dbReference type="TreeFam" id="TF331319"/>
<dbReference type="PathwayCommons" id="Q96MU8"/>
<dbReference type="Reactome" id="R-HSA-201681">
    <property type="pathway name" value="TCF dependent signaling in response to WNT"/>
</dbReference>
<dbReference type="Reactome" id="R-HSA-3772470">
    <property type="pathway name" value="Negative regulation of TCF-dependent signaling by WNT ligand antagonists"/>
</dbReference>
<dbReference type="Reactome" id="R-HSA-5339717">
    <property type="pathway name" value="Signaling by LRP5 mutants"/>
</dbReference>
<dbReference type="SignaLink" id="Q96MU8"/>
<dbReference type="SIGNOR" id="Q96MU8"/>
<dbReference type="BioGRID-ORCS" id="83999">
    <property type="hits" value="12 hits in 1157 CRISPR screens"/>
</dbReference>
<dbReference type="ChiTaRS" id="KREMEN1">
    <property type="organism name" value="human"/>
</dbReference>
<dbReference type="GeneWiki" id="KREMEN1"/>
<dbReference type="GenomeRNAi" id="83999"/>
<dbReference type="Pharos" id="Q96MU8">
    <property type="development level" value="Tbio"/>
</dbReference>
<dbReference type="PRO" id="PR:Q96MU8"/>
<dbReference type="Proteomes" id="UP000005640">
    <property type="component" value="Chromosome 22"/>
</dbReference>
<dbReference type="RNAct" id="Q96MU8">
    <property type="molecule type" value="protein"/>
</dbReference>
<dbReference type="Bgee" id="ENSG00000183762">
    <property type="expression patterns" value="Expressed in upper arm skin and 183 other cell types or tissues"/>
</dbReference>
<dbReference type="ExpressionAtlas" id="Q96MU8">
    <property type="expression patterns" value="baseline and differential"/>
</dbReference>
<dbReference type="GO" id="GO:0016020">
    <property type="term" value="C:membrane"/>
    <property type="evidence" value="ECO:0000304"/>
    <property type="project" value="UniProtKB"/>
</dbReference>
<dbReference type="GO" id="GO:0043025">
    <property type="term" value="C:neuronal cell body"/>
    <property type="evidence" value="ECO:0007669"/>
    <property type="project" value="Ensembl"/>
</dbReference>
<dbReference type="GO" id="GO:0005886">
    <property type="term" value="C:plasma membrane"/>
    <property type="evidence" value="ECO:0000318"/>
    <property type="project" value="GO_Central"/>
</dbReference>
<dbReference type="GO" id="GO:0004888">
    <property type="term" value="F:transmembrane signaling receptor activity"/>
    <property type="evidence" value="ECO:0000318"/>
    <property type="project" value="GO_Central"/>
</dbReference>
<dbReference type="GO" id="GO:0006915">
    <property type="term" value="P:apoptotic process"/>
    <property type="evidence" value="ECO:0000250"/>
    <property type="project" value="UniProtKB"/>
</dbReference>
<dbReference type="GO" id="GO:0007154">
    <property type="term" value="P:cell communication"/>
    <property type="evidence" value="ECO:0000304"/>
    <property type="project" value="UniProtKB"/>
</dbReference>
<dbReference type="GO" id="GO:0060173">
    <property type="term" value="P:limb development"/>
    <property type="evidence" value="ECO:0000250"/>
    <property type="project" value="UniProtKB"/>
</dbReference>
<dbReference type="GO" id="GO:0048681">
    <property type="term" value="P:negative regulation of axon regeneration"/>
    <property type="evidence" value="ECO:0007669"/>
    <property type="project" value="Ensembl"/>
</dbReference>
<dbReference type="GO" id="GO:0090090">
    <property type="term" value="P:negative regulation of canonical Wnt signaling pathway"/>
    <property type="evidence" value="ECO:0000250"/>
    <property type="project" value="UniProtKB"/>
</dbReference>
<dbReference type="GO" id="GO:0030279">
    <property type="term" value="P:negative regulation of ossification"/>
    <property type="evidence" value="ECO:0007669"/>
    <property type="project" value="Ensembl"/>
</dbReference>
<dbReference type="GO" id="GO:0060828">
    <property type="term" value="P:regulation of canonical Wnt signaling pathway"/>
    <property type="evidence" value="ECO:0000303"/>
    <property type="project" value="BHF-UCL"/>
</dbReference>
<dbReference type="GO" id="GO:0007165">
    <property type="term" value="P:signal transduction"/>
    <property type="evidence" value="ECO:0000318"/>
    <property type="project" value="GO_Central"/>
</dbReference>
<dbReference type="GO" id="GO:0016055">
    <property type="term" value="P:Wnt signaling pathway"/>
    <property type="evidence" value="ECO:0007669"/>
    <property type="project" value="UniProtKB-KW"/>
</dbReference>
<dbReference type="CDD" id="cd00041">
    <property type="entry name" value="CUB"/>
    <property type="match status" value="1"/>
</dbReference>
<dbReference type="CDD" id="cd00108">
    <property type="entry name" value="KR"/>
    <property type="match status" value="1"/>
</dbReference>
<dbReference type="FunFam" id="2.40.20.10:FF:000006">
    <property type="entry name" value="Kremen protein 2"/>
    <property type="match status" value="1"/>
</dbReference>
<dbReference type="Gene3D" id="2.40.20.10">
    <property type="entry name" value="Plasminogen Kringle 4"/>
    <property type="match status" value="1"/>
</dbReference>
<dbReference type="Gene3D" id="2.60.120.290">
    <property type="entry name" value="Spermadhesin, CUB domain"/>
    <property type="match status" value="1"/>
</dbReference>
<dbReference type="InterPro" id="IPR000859">
    <property type="entry name" value="CUB_dom"/>
</dbReference>
<dbReference type="InterPro" id="IPR017076">
    <property type="entry name" value="Kremen"/>
</dbReference>
<dbReference type="InterPro" id="IPR051836">
    <property type="entry name" value="Kremen_rcpt"/>
</dbReference>
<dbReference type="InterPro" id="IPR000001">
    <property type="entry name" value="Kringle"/>
</dbReference>
<dbReference type="InterPro" id="IPR013806">
    <property type="entry name" value="Kringle-like"/>
</dbReference>
<dbReference type="InterPro" id="IPR018056">
    <property type="entry name" value="Kringle_CS"/>
</dbReference>
<dbReference type="InterPro" id="IPR038178">
    <property type="entry name" value="Kringle_sf"/>
</dbReference>
<dbReference type="InterPro" id="IPR035914">
    <property type="entry name" value="Sperma_CUB_dom_sf"/>
</dbReference>
<dbReference type="InterPro" id="IPR002889">
    <property type="entry name" value="WSC_carb-bd"/>
</dbReference>
<dbReference type="PANTHER" id="PTHR24269">
    <property type="entry name" value="KREMEN PROTEIN"/>
    <property type="match status" value="1"/>
</dbReference>
<dbReference type="PANTHER" id="PTHR24269:SF13">
    <property type="entry name" value="KREMEN PROTEIN 1"/>
    <property type="match status" value="1"/>
</dbReference>
<dbReference type="Pfam" id="PF00431">
    <property type="entry name" value="CUB"/>
    <property type="match status" value="1"/>
</dbReference>
<dbReference type="Pfam" id="PF00051">
    <property type="entry name" value="Kringle"/>
    <property type="match status" value="1"/>
</dbReference>
<dbReference type="Pfam" id="PF01822">
    <property type="entry name" value="WSC"/>
    <property type="match status" value="1"/>
</dbReference>
<dbReference type="PIRSF" id="PIRSF036961">
    <property type="entry name" value="Kremen"/>
    <property type="match status" value="1"/>
</dbReference>
<dbReference type="PRINTS" id="PR00018">
    <property type="entry name" value="KRINGLE"/>
</dbReference>
<dbReference type="SMART" id="SM00042">
    <property type="entry name" value="CUB"/>
    <property type="match status" value="1"/>
</dbReference>
<dbReference type="SMART" id="SM00130">
    <property type="entry name" value="KR"/>
    <property type="match status" value="1"/>
</dbReference>
<dbReference type="SMART" id="SM00321">
    <property type="entry name" value="WSC"/>
    <property type="match status" value="1"/>
</dbReference>
<dbReference type="SUPFAM" id="SSF57440">
    <property type="entry name" value="Kringle-like"/>
    <property type="match status" value="1"/>
</dbReference>
<dbReference type="SUPFAM" id="SSF49854">
    <property type="entry name" value="Spermadhesin, CUB domain"/>
    <property type="match status" value="1"/>
</dbReference>
<dbReference type="PROSITE" id="PS01180">
    <property type="entry name" value="CUB"/>
    <property type="match status" value="1"/>
</dbReference>
<dbReference type="PROSITE" id="PS00021">
    <property type="entry name" value="KRINGLE_1"/>
    <property type="match status" value="1"/>
</dbReference>
<dbReference type="PROSITE" id="PS50070">
    <property type="entry name" value="KRINGLE_2"/>
    <property type="match status" value="1"/>
</dbReference>
<dbReference type="PROSITE" id="PS51212">
    <property type="entry name" value="WSC"/>
    <property type="match status" value="1"/>
</dbReference>
<protein>
    <recommendedName>
        <fullName>Kremen protein 1</fullName>
    </recommendedName>
    <alternativeName>
        <fullName>Dickkopf receptor</fullName>
    </alternativeName>
    <alternativeName>
        <fullName>Kringle domain-containing transmembrane protein 1</fullName>
    </alternativeName>
    <alternativeName>
        <fullName>Kringle-containing protein marking the eye and the nose</fullName>
    </alternativeName>
</protein>
<reference key="1">
    <citation type="submission" date="2001-10" db="EMBL/GenBank/DDBJ databases">
        <authorList>
            <person name="Nakamura T."/>
            <person name="Nakamura T."/>
        </authorList>
    </citation>
    <scope>NUCLEOTIDE SEQUENCE [MRNA] (ISOFORM 1)</scope>
</reference>
<reference key="2">
    <citation type="journal article" date="2004" name="Nat. Genet.">
        <title>Complete sequencing and characterization of 21,243 full-length human cDNAs.</title>
        <authorList>
            <person name="Ota T."/>
            <person name="Suzuki Y."/>
            <person name="Nishikawa T."/>
            <person name="Otsuki T."/>
            <person name="Sugiyama T."/>
            <person name="Irie R."/>
            <person name="Wakamatsu A."/>
            <person name="Hayashi K."/>
            <person name="Sato H."/>
            <person name="Nagai K."/>
            <person name="Kimura K."/>
            <person name="Makita H."/>
            <person name="Sekine M."/>
            <person name="Obayashi M."/>
            <person name="Nishi T."/>
            <person name="Shibahara T."/>
            <person name="Tanaka T."/>
            <person name="Ishii S."/>
            <person name="Yamamoto J."/>
            <person name="Saito K."/>
            <person name="Kawai Y."/>
            <person name="Isono Y."/>
            <person name="Nakamura Y."/>
            <person name="Nagahari K."/>
            <person name="Murakami K."/>
            <person name="Yasuda T."/>
            <person name="Iwayanagi T."/>
            <person name="Wagatsuma M."/>
            <person name="Shiratori A."/>
            <person name="Sudo H."/>
            <person name="Hosoiri T."/>
            <person name="Kaku Y."/>
            <person name="Kodaira H."/>
            <person name="Kondo H."/>
            <person name="Sugawara M."/>
            <person name="Takahashi M."/>
            <person name="Kanda K."/>
            <person name="Yokoi T."/>
            <person name="Furuya T."/>
            <person name="Kikkawa E."/>
            <person name="Omura Y."/>
            <person name="Abe K."/>
            <person name="Kamihara K."/>
            <person name="Katsuta N."/>
            <person name="Sato K."/>
            <person name="Tanikawa M."/>
            <person name="Yamazaki M."/>
            <person name="Ninomiya K."/>
            <person name="Ishibashi T."/>
            <person name="Yamashita H."/>
            <person name="Murakawa K."/>
            <person name="Fujimori K."/>
            <person name="Tanai H."/>
            <person name="Kimata M."/>
            <person name="Watanabe M."/>
            <person name="Hiraoka S."/>
            <person name="Chiba Y."/>
            <person name="Ishida S."/>
            <person name="Ono Y."/>
            <person name="Takiguchi S."/>
            <person name="Watanabe S."/>
            <person name="Yosida M."/>
            <person name="Hotuta T."/>
            <person name="Kusano J."/>
            <person name="Kanehori K."/>
            <person name="Takahashi-Fujii A."/>
            <person name="Hara H."/>
            <person name="Tanase T.-O."/>
            <person name="Nomura Y."/>
            <person name="Togiya S."/>
            <person name="Komai F."/>
            <person name="Hara R."/>
            <person name="Takeuchi K."/>
            <person name="Arita M."/>
            <person name="Imose N."/>
            <person name="Musashino K."/>
            <person name="Yuuki H."/>
            <person name="Oshima A."/>
            <person name="Sasaki N."/>
            <person name="Aotsuka S."/>
            <person name="Yoshikawa Y."/>
            <person name="Matsunawa H."/>
            <person name="Ichihara T."/>
            <person name="Shiohata N."/>
            <person name="Sano S."/>
            <person name="Moriya S."/>
            <person name="Momiyama H."/>
            <person name="Satoh N."/>
            <person name="Takami S."/>
            <person name="Terashima Y."/>
            <person name="Suzuki O."/>
            <person name="Nakagawa S."/>
            <person name="Senoh A."/>
            <person name="Mizoguchi H."/>
            <person name="Goto Y."/>
            <person name="Shimizu F."/>
            <person name="Wakebe H."/>
            <person name="Hishigaki H."/>
            <person name="Watanabe T."/>
            <person name="Sugiyama A."/>
            <person name="Takemoto M."/>
            <person name="Kawakami B."/>
            <person name="Yamazaki M."/>
            <person name="Watanabe K."/>
            <person name="Kumagai A."/>
            <person name="Itakura S."/>
            <person name="Fukuzumi Y."/>
            <person name="Fujimori Y."/>
            <person name="Komiyama M."/>
            <person name="Tashiro H."/>
            <person name="Tanigami A."/>
            <person name="Fujiwara T."/>
            <person name="Ono T."/>
            <person name="Yamada K."/>
            <person name="Fujii Y."/>
            <person name="Ozaki K."/>
            <person name="Hirao M."/>
            <person name="Ohmori Y."/>
            <person name="Kawabata A."/>
            <person name="Hikiji T."/>
            <person name="Kobatake N."/>
            <person name="Inagaki H."/>
            <person name="Ikema Y."/>
            <person name="Okamoto S."/>
            <person name="Okitani R."/>
            <person name="Kawakami T."/>
            <person name="Noguchi S."/>
            <person name="Itoh T."/>
            <person name="Shigeta K."/>
            <person name="Senba T."/>
            <person name="Matsumura K."/>
            <person name="Nakajima Y."/>
            <person name="Mizuno T."/>
            <person name="Morinaga M."/>
            <person name="Sasaki M."/>
            <person name="Togashi T."/>
            <person name="Oyama M."/>
            <person name="Hata H."/>
            <person name="Watanabe M."/>
            <person name="Komatsu T."/>
            <person name="Mizushima-Sugano J."/>
            <person name="Satoh T."/>
            <person name="Shirai Y."/>
            <person name="Takahashi Y."/>
            <person name="Nakagawa K."/>
            <person name="Okumura K."/>
            <person name="Nagase T."/>
            <person name="Nomura N."/>
            <person name="Kikuchi H."/>
            <person name="Masuho Y."/>
            <person name="Yamashita R."/>
            <person name="Nakai K."/>
            <person name="Yada T."/>
            <person name="Nakamura Y."/>
            <person name="Ohara O."/>
            <person name="Isogai T."/>
            <person name="Sugano S."/>
        </authorList>
    </citation>
    <scope>NUCLEOTIDE SEQUENCE [LARGE SCALE MRNA] (ISOFORM 2)</scope>
</reference>
<reference key="3">
    <citation type="journal article" date="1999" name="Nature">
        <title>The DNA sequence of human chromosome 22.</title>
        <authorList>
            <person name="Dunham I."/>
            <person name="Hunt A.R."/>
            <person name="Collins J.E."/>
            <person name="Bruskiewich R."/>
            <person name="Beare D.M."/>
            <person name="Clamp M."/>
            <person name="Smink L.J."/>
            <person name="Ainscough R."/>
            <person name="Almeida J.P."/>
            <person name="Babbage A.K."/>
            <person name="Bagguley C."/>
            <person name="Bailey J."/>
            <person name="Barlow K.F."/>
            <person name="Bates K.N."/>
            <person name="Beasley O.P."/>
            <person name="Bird C.P."/>
            <person name="Blakey S.E."/>
            <person name="Bridgeman A.M."/>
            <person name="Buck D."/>
            <person name="Burgess J."/>
            <person name="Burrill W.D."/>
            <person name="Burton J."/>
            <person name="Carder C."/>
            <person name="Carter N.P."/>
            <person name="Chen Y."/>
            <person name="Clark G."/>
            <person name="Clegg S.M."/>
            <person name="Cobley V.E."/>
            <person name="Cole C.G."/>
            <person name="Collier R.E."/>
            <person name="Connor R."/>
            <person name="Conroy D."/>
            <person name="Corby N.R."/>
            <person name="Coville G.J."/>
            <person name="Cox A.V."/>
            <person name="Davis J."/>
            <person name="Dawson E."/>
            <person name="Dhami P.D."/>
            <person name="Dockree C."/>
            <person name="Dodsworth S.J."/>
            <person name="Durbin R.M."/>
            <person name="Ellington A.G."/>
            <person name="Evans K.L."/>
            <person name="Fey J.M."/>
            <person name="Fleming K."/>
            <person name="French L."/>
            <person name="Garner A.A."/>
            <person name="Gilbert J.G.R."/>
            <person name="Goward M.E."/>
            <person name="Grafham D.V."/>
            <person name="Griffiths M.N.D."/>
            <person name="Hall C."/>
            <person name="Hall R.E."/>
            <person name="Hall-Tamlyn G."/>
            <person name="Heathcott R.W."/>
            <person name="Ho S."/>
            <person name="Holmes S."/>
            <person name="Hunt S.E."/>
            <person name="Jones M.C."/>
            <person name="Kershaw J."/>
            <person name="Kimberley A.M."/>
            <person name="King A."/>
            <person name="Laird G.K."/>
            <person name="Langford C.F."/>
            <person name="Leversha M.A."/>
            <person name="Lloyd C."/>
            <person name="Lloyd D.M."/>
            <person name="Martyn I.D."/>
            <person name="Mashreghi-Mohammadi M."/>
            <person name="Matthews L.H."/>
            <person name="Mccann O.T."/>
            <person name="Mcclay J."/>
            <person name="Mclaren S."/>
            <person name="McMurray A.A."/>
            <person name="Milne S.A."/>
            <person name="Mortimore B.J."/>
            <person name="Odell C.N."/>
            <person name="Pavitt R."/>
            <person name="Pearce A.V."/>
            <person name="Pearson D."/>
            <person name="Phillimore B.J.C.T."/>
            <person name="Phillips S.H."/>
            <person name="Plumb R.W."/>
            <person name="Ramsay H."/>
            <person name="Ramsey Y."/>
            <person name="Rogers L."/>
            <person name="Ross M.T."/>
            <person name="Scott C.E."/>
            <person name="Sehra H.K."/>
            <person name="Skuce C.D."/>
            <person name="Smalley S."/>
            <person name="Smith M.L."/>
            <person name="Soderlund C."/>
            <person name="Spragon L."/>
            <person name="Steward C.A."/>
            <person name="Sulston J.E."/>
            <person name="Swann R.M."/>
            <person name="Vaudin M."/>
            <person name="Wall M."/>
            <person name="Wallis J.M."/>
            <person name="Whiteley M.N."/>
            <person name="Willey D.L."/>
            <person name="Williams L."/>
            <person name="Williams S.A."/>
            <person name="Williamson H."/>
            <person name="Wilmer T.E."/>
            <person name="Wilming L."/>
            <person name="Wright C.L."/>
            <person name="Hubbard T."/>
            <person name="Bentley D.R."/>
            <person name="Beck S."/>
            <person name="Rogers J."/>
            <person name="Shimizu N."/>
            <person name="Minoshima S."/>
            <person name="Kawasaki K."/>
            <person name="Sasaki T."/>
            <person name="Asakawa S."/>
            <person name="Kudoh J."/>
            <person name="Shintani A."/>
            <person name="Shibuya K."/>
            <person name="Yoshizaki Y."/>
            <person name="Aoki N."/>
            <person name="Mitsuyama S."/>
            <person name="Roe B.A."/>
            <person name="Chen F."/>
            <person name="Chu L."/>
            <person name="Crabtree J."/>
            <person name="Deschamps S."/>
            <person name="Do A."/>
            <person name="Do T."/>
            <person name="Dorman A."/>
            <person name="Fang F."/>
            <person name="Fu Y."/>
            <person name="Hu P."/>
            <person name="Hua A."/>
            <person name="Kenton S."/>
            <person name="Lai H."/>
            <person name="Lao H.I."/>
            <person name="Lewis J."/>
            <person name="Lewis S."/>
            <person name="Lin S.-P."/>
            <person name="Loh P."/>
            <person name="Malaj E."/>
            <person name="Nguyen T."/>
            <person name="Pan H."/>
            <person name="Phan S."/>
            <person name="Qi S."/>
            <person name="Qian Y."/>
            <person name="Ray L."/>
            <person name="Ren Q."/>
            <person name="Shaull S."/>
            <person name="Sloan D."/>
            <person name="Song L."/>
            <person name="Wang Q."/>
            <person name="Wang Y."/>
            <person name="Wang Z."/>
            <person name="White J."/>
            <person name="Willingham D."/>
            <person name="Wu H."/>
            <person name="Yao Z."/>
            <person name="Zhan M."/>
            <person name="Zhang G."/>
            <person name="Chissoe S."/>
            <person name="Murray J."/>
            <person name="Miller N."/>
            <person name="Minx P."/>
            <person name="Fulton R."/>
            <person name="Johnson D."/>
            <person name="Bemis G."/>
            <person name="Bentley D."/>
            <person name="Bradshaw H."/>
            <person name="Bourne S."/>
            <person name="Cordes M."/>
            <person name="Du Z."/>
            <person name="Fulton L."/>
            <person name="Goela D."/>
            <person name="Graves T."/>
            <person name="Hawkins J."/>
            <person name="Hinds K."/>
            <person name="Kemp K."/>
            <person name="Latreille P."/>
            <person name="Layman D."/>
            <person name="Ozersky P."/>
            <person name="Rohlfing T."/>
            <person name="Scheet P."/>
            <person name="Walker C."/>
            <person name="Wamsley A."/>
            <person name="Wohldmann P."/>
            <person name="Pepin K."/>
            <person name="Nelson J."/>
            <person name="Korf I."/>
            <person name="Bedell J.A."/>
            <person name="Hillier L.W."/>
            <person name="Mardis E."/>
            <person name="Waterston R."/>
            <person name="Wilson R."/>
            <person name="Emanuel B.S."/>
            <person name="Shaikh T."/>
            <person name="Kurahashi H."/>
            <person name="Saitta S."/>
            <person name="Budarf M.L."/>
            <person name="McDermid H.E."/>
            <person name="Johnson A."/>
            <person name="Wong A.C.C."/>
            <person name="Morrow B.E."/>
            <person name="Edelmann L."/>
            <person name="Kim U.J."/>
            <person name="Shizuya H."/>
            <person name="Simon M.I."/>
            <person name="Dumanski J.P."/>
            <person name="Peyrard M."/>
            <person name="Kedra D."/>
            <person name="Seroussi E."/>
            <person name="Fransson I."/>
            <person name="Tapia I."/>
            <person name="Bruder C.E."/>
            <person name="O'Brien K.P."/>
            <person name="Wilkinson P."/>
            <person name="Bodenteich A."/>
            <person name="Hartman K."/>
            <person name="Hu X."/>
            <person name="Khan A.S."/>
            <person name="Lane L."/>
            <person name="Tilahun Y."/>
            <person name="Wright H."/>
        </authorList>
    </citation>
    <scope>NUCLEOTIDE SEQUENCE [LARGE SCALE GENOMIC DNA]</scope>
</reference>
<reference key="4">
    <citation type="submission" date="2005-07" db="EMBL/GenBank/DDBJ databases">
        <authorList>
            <person name="Mural R.J."/>
            <person name="Istrail S."/>
            <person name="Sutton G.G."/>
            <person name="Florea L."/>
            <person name="Halpern A.L."/>
            <person name="Mobarry C.M."/>
            <person name="Lippert R."/>
            <person name="Walenz B."/>
            <person name="Shatkay H."/>
            <person name="Dew I."/>
            <person name="Miller J.R."/>
            <person name="Flanigan M.J."/>
            <person name="Edwards N.J."/>
            <person name="Bolanos R."/>
            <person name="Fasulo D."/>
            <person name="Halldorsson B.V."/>
            <person name="Hannenhalli S."/>
            <person name="Turner R."/>
            <person name="Yooseph S."/>
            <person name="Lu F."/>
            <person name="Nusskern D.R."/>
            <person name="Shue B.C."/>
            <person name="Zheng X.H."/>
            <person name="Zhong F."/>
            <person name="Delcher A.L."/>
            <person name="Huson D.H."/>
            <person name="Kravitz S.A."/>
            <person name="Mouchard L."/>
            <person name="Reinert K."/>
            <person name="Remington K.A."/>
            <person name="Clark A.G."/>
            <person name="Waterman M.S."/>
            <person name="Eichler E.E."/>
            <person name="Adams M.D."/>
            <person name="Hunkapiller M.W."/>
            <person name="Myers E.W."/>
            <person name="Venter J.C."/>
        </authorList>
    </citation>
    <scope>NUCLEOTIDE SEQUENCE [LARGE SCALE GENOMIC DNA]</scope>
</reference>
<reference key="5">
    <citation type="journal article" date="2004" name="Genome Res.">
        <title>The status, quality, and expansion of the NIH full-length cDNA project: the Mammalian Gene Collection (MGC).</title>
        <authorList>
            <consortium name="The MGC Project Team"/>
        </authorList>
    </citation>
    <scope>NUCLEOTIDE SEQUENCE [LARGE SCALE MRNA] (ISOFORM 3)</scope>
    <source>
        <tissue>Eye</tissue>
    </source>
</reference>
<reference key="6">
    <citation type="journal article" date="2007" name="Proc. Natl. Acad. Sci. U.S.A.">
        <title>R-Spondin1 regulates Wnt signaling by inhibiting internalization of LRP6.</title>
        <authorList>
            <person name="Binnerts M.E."/>
            <person name="Kim K.A."/>
            <person name="Bright J.M."/>
            <person name="Patel S.M."/>
            <person name="Tran K."/>
            <person name="Zhou M."/>
            <person name="Leung J.M."/>
            <person name="Liu Y."/>
            <person name="Lomas W.E. III"/>
            <person name="Dixon M."/>
            <person name="Hazell S.A."/>
            <person name="Wagle M."/>
            <person name="Nie W.S."/>
            <person name="Tomasevic N."/>
            <person name="Williams J."/>
            <person name="Zhan X."/>
            <person name="Levy M.D."/>
            <person name="Funk W.D."/>
            <person name="Abo A."/>
        </authorList>
    </citation>
    <scope>INTERACTION WITH LRP6; DKK1 AND RSPO1</scope>
</reference>
<reference key="7">
    <citation type="journal article" date="2016" name="Eur. J. Hum. Genet.">
        <title>Mutation of KREMEN1, a modulator of Wnt signaling, is responsible for ectodermal dysplasia including oligodontia in Palestinian families.</title>
        <authorList>
            <person name="Issa Y.A."/>
            <person name="Kamal L."/>
            <person name="Rayyan A.A."/>
            <person name="Dweik D."/>
            <person name="Pierce S."/>
            <person name="Lee M.K."/>
            <person name="King M.C."/>
            <person name="Walsh T."/>
            <person name="Kanaan M."/>
        </authorList>
    </citation>
    <scope>INVOLVEMENT IN ECTD13</scope>
    <scope>VARIANT ECTD13 SER-207</scope>
</reference>
<reference key="8">
    <citation type="journal article" date="2016" name="Structure">
        <title>Structure of the dual-mode wnt regulator Kremen1 and insight into ternary complex formation with LRP6 and Dickkopf.</title>
        <authorList>
            <person name="Zebisch M."/>
            <person name="Jackson V.A."/>
            <person name="Zhao Y."/>
            <person name="Jones E.Y."/>
        </authorList>
    </citation>
    <scope>X-RAY CRYSTALLOGRAPHY (1.90 ANGSTROMS) OF 29-373</scope>
    <scope>DISULFIDE BOND</scope>
    <scope>IDENTIFICATION IN A TERNARY COMPLEX WITH DKK1 AND LRP6</scope>
</reference>
<gene>
    <name type="primary">KREMEN1</name>
    <name type="synonym">KREMEN</name>
    <name type="synonym">KRM1</name>
</gene>
<keyword id="KW-0002">3D-structure</keyword>
<keyword id="KW-0025">Alternative splicing</keyword>
<keyword id="KW-1003">Cell membrane</keyword>
<keyword id="KW-0225">Disease variant</keyword>
<keyword id="KW-1015">Disulfide bond</keyword>
<keyword id="KW-0038">Ectodermal dysplasia</keyword>
<keyword id="KW-0325">Glycoprotein</keyword>
<keyword id="KW-0420">Kringle</keyword>
<keyword id="KW-0472">Membrane</keyword>
<keyword id="KW-1267">Proteomics identification</keyword>
<keyword id="KW-1185">Reference proteome</keyword>
<keyword id="KW-0732">Signal</keyword>
<keyword id="KW-0812">Transmembrane</keyword>
<keyword id="KW-1133">Transmembrane helix</keyword>
<keyword id="KW-0879">Wnt signaling pathway</keyword>
<evidence type="ECO:0000250" key="1">
    <source>
        <dbReference type="UniProtKB" id="Q90Y90"/>
    </source>
</evidence>
<evidence type="ECO:0000250" key="2">
    <source>
        <dbReference type="UniProtKB" id="Q99N43"/>
    </source>
</evidence>
<evidence type="ECO:0000255" key="3"/>
<evidence type="ECO:0000255" key="4">
    <source>
        <dbReference type="PROSITE-ProRule" id="PRU00059"/>
    </source>
</evidence>
<evidence type="ECO:0000255" key="5">
    <source>
        <dbReference type="PROSITE-ProRule" id="PRU00121"/>
    </source>
</evidence>
<evidence type="ECO:0000255" key="6">
    <source>
        <dbReference type="PROSITE-ProRule" id="PRU00558"/>
    </source>
</evidence>
<evidence type="ECO:0000269" key="7">
    <source>
    </source>
</evidence>
<evidence type="ECO:0000269" key="8">
    <source>
    </source>
</evidence>
<evidence type="ECO:0000269" key="9">
    <source>
    </source>
</evidence>
<evidence type="ECO:0000303" key="10">
    <source>
    </source>
</evidence>
<evidence type="ECO:0000303" key="11">
    <source>
    </source>
</evidence>
<evidence type="ECO:0000305" key="12"/>
<evidence type="ECO:0007744" key="13">
    <source>
        <dbReference type="PDB" id="5FWS"/>
    </source>
</evidence>
<evidence type="ECO:0007744" key="14">
    <source>
        <dbReference type="PDB" id="5FWT"/>
    </source>
</evidence>
<evidence type="ECO:0007744" key="15">
    <source>
        <dbReference type="PDB" id="5FWU"/>
    </source>
</evidence>
<evidence type="ECO:0007744" key="16">
    <source>
        <dbReference type="PDB" id="5FWV"/>
    </source>
</evidence>
<evidence type="ECO:0007744" key="17">
    <source>
        <dbReference type="PDB" id="5FWW"/>
    </source>
</evidence>
<evidence type="ECO:0007829" key="18">
    <source>
        <dbReference type="PDB" id="5FWS"/>
    </source>
</evidence>
<evidence type="ECO:0007829" key="19">
    <source>
        <dbReference type="PDB" id="5FWT"/>
    </source>
</evidence>
<evidence type="ECO:0007829" key="20">
    <source>
        <dbReference type="PDB" id="5FWW"/>
    </source>
</evidence>
<evidence type="ECO:0007829" key="21">
    <source>
        <dbReference type="PDB" id="7BZT"/>
    </source>
</evidence>
<organism>
    <name type="scientific">Homo sapiens</name>
    <name type="common">Human</name>
    <dbReference type="NCBI Taxonomy" id="9606"/>
    <lineage>
        <taxon>Eukaryota</taxon>
        <taxon>Metazoa</taxon>
        <taxon>Chordata</taxon>
        <taxon>Craniata</taxon>
        <taxon>Vertebrata</taxon>
        <taxon>Euteleostomi</taxon>
        <taxon>Mammalia</taxon>
        <taxon>Eutheria</taxon>
        <taxon>Euarchontoglires</taxon>
        <taxon>Primates</taxon>
        <taxon>Haplorrhini</taxon>
        <taxon>Catarrhini</taxon>
        <taxon>Hominidae</taxon>
        <taxon>Homo</taxon>
    </lineage>
</organism>
<proteinExistence type="evidence at protein level"/>
<feature type="signal peptide" evidence="3">
    <location>
        <begin position="1"/>
        <end position="19"/>
    </location>
</feature>
<feature type="chain" id="PRO_0000021564" description="Kremen protein 1">
    <location>
        <begin position="20"/>
        <end position="473"/>
    </location>
</feature>
<feature type="topological domain" description="Extracellular" evidence="3">
    <location>
        <begin position="21"/>
        <end position="392"/>
    </location>
</feature>
<feature type="transmembrane region" description="Helical" evidence="3">
    <location>
        <begin position="393"/>
        <end position="413"/>
    </location>
</feature>
<feature type="topological domain" description="Cytoplasmic" evidence="3">
    <location>
        <begin position="414"/>
        <end position="473"/>
    </location>
</feature>
<feature type="domain" description="Kringle" evidence="5">
    <location>
        <begin position="31"/>
        <end position="114"/>
    </location>
</feature>
<feature type="domain" description="WSC" evidence="6">
    <location>
        <begin position="116"/>
        <end position="210"/>
    </location>
</feature>
<feature type="domain" description="CUB" evidence="4">
    <location>
        <begin position="214"/>
        <end position="321"/>
    </location>
</feature>
<feature type="region of interest" description="Essential for apoptotic activity" evidence="2">
    <location>
        <begin position="414"/>
        <end position="473"/>
    </location>
</feature>
<feature type="glycosylation site" description="N-linked (GlcNAc...) asparagine" evidence="3">
    <location>
        <position position="45"/>
    </location>
</feature>
<feature type="glycosylation site" description="N-linked (GlcNAc...) asparagine" evidence="3">
    <location>
        <position position="59"/>
    </location>
</feature>
<feature type="glycosylation site" description="N-linked (GlcNAc...) asparagine" evidence="3">
    <location>
        <position position="217"/>
    </location>
</feature>
<feature type="glycosylation site" description="N-linked (GlcNAc...) asparagine" evidence="3">
    <location>
        <position position="293"/>
    </location>
</feature>
<feature type="glycosylation site" description="N-linked (GlcNAc...) asparagine" evidence="3">
    <location>
        <position position="333"/>
    </location>
</feature>
<feature type="glycosylation site" description="N-linked (GlcNAc...) asparagine" evidence="3">
    <location>
        <position position="345"/>
    </location>
</feature>
<feature type="disulfide bond" evidence="9 13 14 15 16 17">
    <location>
        <begin position="32"/>
        <end position="114"/>
    </location>
</feature>
<feature type="disulfide bond" evidence="9 13 14 15 16 17">
    <location>
        <begin position="55"/>
        <end position="95"/>
    </location>
</feature>
<feature type="disulfide bond" evidence="9 13 14 15 16 17">
    <location>
        <begin position="84"/>
        <end position="109"/>
    </location>
</feature>
<feature type="disulfide bond" evidence="9 13 14 15 16 17">
    <location>
        <begin position="122"/>
        <end position="186"/>
    </location>
</feature>
<feature type="disulfide bond" evidence="9 13 14 15 16 17">
    <location>
        <begin position="147"/>
        <end position="167"/>
    </location>
</feature>
<feature type="disulfide bond" evidence="9 13 14 15 16 17">
    <location>
        <begin position="151"/>
        <end position="169"/>
    </location>
</feature>
<feature type="disulfide bond" evidence="9 13 14 15 16 17">
    <location>
        <begin position="190"/>
        <end position="198"/>
    </location>
</feature>
<feature type="disulfide bond" evidence="9 13 14 15 16 17">
    <location>
        <begin position="214"/>
        <end position="240"/>
    </location>
</feature>
<feature type="splice variant" id="VSP_034914" description="In isoform 2 and isoform 3." evidence="10 11">
    <original>E</original>
    <variation>GPE</variation>
    <location>
        <position position="31"/>
    </location>
</feature>
<feature type="splice variant" id="VSP_015698" description="In isoform 3." evidence="11">
    <location>
        <begin position="373"/>
        <end position="389"/>
    </location>
</feature>
<feature type="splice variant" id="VSP_003900" description="In isoform 2." evidence="10">
    <original>VSD</original>
    <variation>AIQDSEVTSLIWSQGQPRSI</variation>
    <location>
        <begin position="471"/>
        <end position="473"/>
    </location>
</feature>
<feature type="sequence variant" id="VAR_078807" description="In ECTD13; dbSNP:rs1057524917." evidence="8">
    <original>F</original>
    <variation>S</variation>
    <location>
        <position position="207"/>
    </location>
</feature>
<feature type="sequence conflict" description="In Ref. 2; BAB71180." evidence="12" ref="2">
    <original>I</original>
    <variation>V</variation>
    <location>
        <position position="204"/>
    </location>
</feature>
<feature type="strand" evidence="18">
    <location>
        <begin position="34"/>
        <end position="36"/>
    </location>
</feature>
<feature type="strand" evidence="20">
    <location>
        <begin position="46"/>
        <end position="48"/>
    </location>
</feature>
<feature type="turn" evidence="18">
    <location>
        <begin position="49"/>
        <end position="51"/>
    </location>
</feature>
<feature type="strand" evidence="21">
    <location>
        <begin position="54"/>
        <end position="56"/>
    </location>
</feature>
<feature type="turn" evidence="19">
    <location>
        <begin position="58"/>
        <end position="60"/>
    </location>
</feature>
<feature type="strand" evidence="21">
    <location>
        <begin position="63"/>
        <end position="65"/>
    </location>
</feature>
<feature type="turn" evidence="18">
    <location>
        <begin position="68"/>
        <end position="70"/>
    </location>
</feature>
<feature type="helix" evidence="18">
    <location>
        <begin position="72"/>
        <end position="77"/>
    </location>
</feature>
<feature type="strand" evidence="18">
    <location>
        <begin position="79"/>
        <end position="81"/>
    </location>
</feature>
<feature type="strand" evidence="18">
    <location>
        <begin position="94"/>
        <end position="96"/>
    </location>
</feature>
<feature type="strand" evidence="21">
    <location>
        <begin position="101"/>
        <end position="103"/>
    </location>
</feature>
<feature type="strand" evidence="18">
    <location>
        <begin position="106"/>
        <end position="108"/>
    </location>
</feature>
<feature type="strand" evidence="18">
    <location>
        <begin position="119"/>
        <end position="124"/>
    </location>
</feature>
<feature type="strand" evidence="18">
    <location>
        <begin position="127"/>
        <end position="129"/>
    </location>
</feature>
<feature type="strand" evidence="18">
    <location>
        <begin position="134"/>
        <end position="138"/>
    </location>
</feature>
<feature type="helix" evidence="18">
    <location>
        <begin position="144"/>
        <end position="153"/>
    </location>
</feature>
<feature type="strand" evidence="18">
    <location>
        <begin position="157"/>
        <end position="162"/>
    </location>
</feature>
<feature type="turn" evidence="18">
    <location>
        <begin position="163"/>
        <end position="165"/>
    </location>
</feature>
<feature type="strand" evidence="18">
    <location>
        <begin position="166"/>
        <end position="170"/>
    </location>
</feature>
<feature type="turn" evidence="18">
    <location>
        <begin position="173"/>
        <end position="178"/>
    </location>
</feature>
<feature type="helix" evidence="18">
    <location>
        <begin position="183"/>
        <end position="186"/>
    </location>
</feature>
<feature type="strand" evidence="18">
    <location>
        <begin position="193"/>
        <end position="197"/>
    </location>
</feature>
<feature type="strand" evidence="18">
    <location>
        <begin position="203"/>
        <end position="208"/>
    </location>
</feature>
<feature type="turn" evidence="18">
    <location>
        <begin position="209"/>
        <end position="212"/>
    </location>
</feature>
<feature type="strand" evidence="18">
    <location>
        <begin position="216"/>
        <end position="218"/>
    </location>
</feature>
<feature type="strand" evidence="18">
    <location>
        <begin position="220"/>
        <end position="226"/>
    </location>
</feature>
<feature type="turn" evidence="18">
    <location>
        <begin position="228"/>
        <end position="231"/>
    </location>
</feature>
<feature type="strand" evidence="18">
    <location>
        <begin position="239"/>
        <end position="245"/>
    </location>
</feature>
<feature type="strand" evidence="18">
    <location>
        <begin position="250"/>
        <end position="260"/>
    </location>
</feature>
<feature type="strand" evidence="18">
    <location>
        <begin position="266"/>
        <end position="272"/>
    </location>
</feature>
<feature type="turn" evidence="18">
    <location>
        <begin position="273"/>
        <end position="275"/>
    </location>
</feature>
<feature type="strand" evidence="18">
    <location>
        <begin position="278"/>
        <end position="283"/>
    </location>
</feature>
<feature type="strand" evidence="18">
    <location>
        <begin position="290"/>
        <end position="294"/>
    </location>
</feature>
<feature type="strand" evidence="18">
    <location>
        <begin position="297"/>
        <end position="304"/>
    </location>
</feature>
<feature type="strand" evidence="18">
    <location>
        <begin position="313"/>
        <end position="321"/>
    </location>
</feature>
<sequence length="473" mass="51744">MAPPAARLALLSAAALTLAARPAPSPGLGPECFTANGADYRGTQNWTALQGGKPCLFWNETFQHPYNTLKYPNGEGGLGEHNYCRNPDGDVSPWCYVAEHEDGVYWKYCEIPACQMPGNLGCYKDHGNPPPLTGTSKTSNKLTIQTCISFCRSQRFKFAGMESGYACFCGNNPDYWKYGEAASTECNSVCFGDHTQPCGGDGRIILFDTLVGACGGNYSAMSSVVYSPDFPDTYATGRVCYWTIRVPGASHIHFSFPLFDIRDSADMVELLDGYTHRVLARFHGRSRPPLSFNVSLDFVILYFFSDRINQAQGFAVLYQAVKEELPQERPAVNQTVAEVITEQANLSVSAARSSKVLYVITTSPSHPPQTVPGSNSWAPPMGAGSHRVEGWTVYGLATLLILTVTAIVAKILLHVTFKSHRVPASGDLRDCHQPGTSGEIWSIFYKPSTSISIFKKKLKGQSQQDDRNPLVSD</sequence>